<organism>
    <name type="scientific">Kineococcus radiotolerans (strain ATCC BAA-149 / DSM 14245 / SRS30216)</name>
    <dbReference type="NCBI Taxonomy" id="266940"/>
    <lineage>
        <taxon>Bacteria</taxon>
        <taxon>Bacillati</taxon>
        <taxon>Actinomycetota</taxon>
        <taxon>Actinomycetes</taxon>
        <taxon>Kineosporiales</taxon>
        <taxon>Kineosporiaceae</taxon>
        <taxon>Kineococcus</taxon>
    </lineage>
</organism>
<feature type="chain" id="PRO_1000085605" description="Acyl carrier protein">
    <location>
        <begin position="1"/>
        <end position="81"/>
    </location>
</feature>
<feature type="domain" description="Carrier" evidence="2">
    <location>
        <begin position="2"/>
        <end position="80"/>
    </location>
</feature>
<feature type="modified residue" description="O-(pantetheine 4'-phosphoryl)serine" evidence="2">
    <location>
        <position position="40"/>
    </location>
</feature>
<proteinExistence type="inferred from homology"/>
<comment type="function">
    <text evidence="1">Carrier of the growing fatty acid chain in fatty acid biosynthesis.</text>
</comment>
<comment type="pathway">
    <text evidence="1">Lipid metabolism; fatty acid biosynthesis.</text>
</comment>
<comment type="subcellular location">
    <subcellularLocation>
        <location evidence="1">Cytoplasm</location>
    </subcellularLocation>
</comment>
<comment type="PTM">
    <text evidence="1">4'-phosphopantetheine is transferred from CoA to a specific serine of apo-ACP by AcpS. This modification is essential for activity because fatty acids are bound in thioester linkage to the sulfhydryl of the prosthetic group.</text>
</comment>
<comment type="similarity">
    <text evidence="1">Belongs to the acyl carrier protein (ACP) family.</text>
</comment>
<evidence type="ECO:0000255" key="1">
    <source>
        <dbReference type="HAMAP-Rule" id="MF_01217"/>
    </source>
</evidence>
<evidence type="ECO:0000255" key="2">
    <source>
        <dbReference type="PROSITE-ProRule" id="PRU00258"/>
    </source>
</evidence>
<keyword id="KW-0963">Cytoplasm</keyword>
<keyword id="KW-0275">Fatty acid biosynthesis</keyword>
<keyword id="KW-0276">Fatty acid metabolism</keyword>
<keyword id="KW-0444">Lipid biosynthesis</keyword>
<keyword id="KW-0443">Lipid metabolism</keyword>
<keyword id="KW-0596">Phosphopantetheine</keyword>
<keyword id="KW-0597">Phosphoprotein</keyword>
<keyword id="KW-1185">Reference proteome</keyword>
<accession>A6WDC0</accession>
<sequence>MASEQEILSGLAEIVNEETGLPTDSVLADKSFTDDLDIDSLSMMTIVVNAEEKFSVRIPDEDVKNLRTVGDAVAYISQAQG</sequence>
<protein>
    <recommendedName>
        <fullName evidence="1">Acyl carrier protein</fullName>
        <shortName evidence="1">ACP</shortName>
    </recommendedName>
</protein>
<reference key="1">
    <citation type="journal article" date="2008" name="PLoS ONE">
        <title>Survival in nuclear waste, extreme resistance, and potential applications gleaned from the genome sequence of Kineococcus radiotolerans SRS30216.</title>
        <authorList>
            <person name="Bagwell C.E."/>
            <person name="Bhat S."/>
            <person name="Hawkins G.M."/>
            <person name="Smith B.W."/>
            <person name="Biswas T."/>
            <person name="Hoover T.R."/>
            <person name="Saunders E."/>
            <person name="Han C.S."/>
            <person name="Tsodikov O.V."/>
            <person name="Shimkets L.J."/>
        </authorList>
    </citation>
    <scope>NUCLEOTIDE SEQUENCE [LARGE SCALE GENOMIC DNA]</scope>
    <source>
        <strain>ATCC BAA-149 / DSM 14245 / SRS30216</strain>
    </source>
</reference>
<gene>
    <name evidence="1" type="primary">acpP</name>
    <name type="ordered locus">Krad_3345</name>
</gene>
<dbReference type="EMBL" id="CP000750">
    <property type="protein sequence ID" value="ABS04809.1"/>
    <property type="molecule type" value="Genomic_DNA"/>
</dbReference>
<dbReference type="RefSeq" id="WP_012086932.1">
    <property type="nucleotide sequence ID" value="NC_009664.2"/>
</dbReference>
<dbReference type="SMR" id="A6WDC0"/>
<dbReference type="STRING" id="266940.Krad_3345"/>
<dbReference type="KEGG" id="kra:Krad_3345"/>
<dbReference type="eggNOG" id="COG0236">
    <property type="taxonomic scope" value="Bacteria"/>
</dbReference>
<dbReference type="HOGENOM" id="CLU_108696_5_6_11"/>
<dbReference type="OrthoDB" id="9804551at2"/>
<dbReference type="UniPathway" id="UPA00094"/>
<dbReference type="Proteomes" id="UP000001116">
    <property type="component" value="Chromosome"/>
</dbReference>
<dbReference type="GO" id="GO:0005829">
    <property type="term" value="C:cytosol"/>
    <property type="evidence" value="ECO:0007669"/>
    <property type="project" value="TreeGrafter"/>
</dbReference>
<dbReference type="GO" id="GO:0016020">
    <property type="term" value="C:membrane"/>
    <property type="evidence" value="ECO:0007669"/>
    <property type="project" value="GOC"/>
</dbReference>
<dbReference type="GO" id="GO:0000035">
    <property type="term" value="F:acyl binding"/>
    <property type="evidence" value="ECO:0007669"/>
    <property type="project" value="TreeGrafter"/>
</dbReference>
<dbReference type="GO" id="GO:0000036">
    <property type="term" value="F:acyl carrier activity"/>
    <property type="evidence" value="ECO:0007669"/>
    <property type="project" value="UniProtKB-UniRule"/>
</dbReference>
<dbReference type="GO" id="GO:0009245">
    <property type="term" value="P:lipid A biosynthetic process"/>
    <property type="evidence" value="ECO:0007669"/>
    <property type="project" value="TreeGrafter"/>
</dbReference>
<dbReference type="Gene3D" id="1.10.1200.10">
    <property type="entry name" value="ACP-like"/>
    <property type="match status" value="1"/>
</dbReference>
<dbReference type="HAMAP" id="MF_01217">
    <property type="entry name" value="Acyl_carrier"/>
    <property type="match status" value="1"/>
</dbReference>
<dbReference type="InterPro" id="IPR003231">
    <property type="entry name" value="ACP"/>
</dbReference>
<dbReference type="InterPro" id="IPR036736">
    <property type="entry name" value="ACP-like_sf"/>
</dbReference>
<dbReference type="InterPro" id="IPR009081">
    <property type="entry name" value="PP-bd_ACP"/>
</dbReference>
<dbReference type="NCBIfam" id="NF002147">
    <property type="entry name" value="PRK00982.1-1"/>
    <property type="match status" value="1"/>
</dbReference>
<dbReference type="NCBIfam" id="NF002148">
    <property type="entry name" value="PRK00982.1-2"/>
    <property type="match status" value="1"/>
</dbReference>
<dbReference type="NCBIfam" id="NF002150">
    <property type="entry name" value="PRK00982.1-4"/>
    <property type="match status" value="1"/>
</dbReference>
<dbReference type="PANTHER" id="PTHR20863">
    <property type="entry name" value="ACYL CARRIER PROTEIN"/>
    <property type="match status" value="1"/>
</dbReference>
<dbReference type="PANTHER" id="PTHR20863:SF76">
    <property type="entry name" value="CARRIER DOMAIN-CONTAINING PROTEIN"/>
    <property type="match status" value="1"/>
</dbReference>
<dbReference type="Pfam" id="PF00550">
    <property type="entry name" value="PP-binding"/>
    <property type="match status" value="1"/>
</dbReference>
<dbReference type="SUPFAM" id="SSF47336">
    <property type="entry name" value="ACP-like"/>
    <property type="match status" value="1"/>
</dbReference>
<dbReference type="PROSITE" id="PS50075">
    <property type="entry name" value="CARRIER"/>
    <property type="match status" value="1"/>
</dbReference>
<name>ACP_KINRD</name>